<protein>
    <recommendedName>
        <fullName>Multidrug resistance protein MdtK</fullName>
    </recommendedName>
    <alternativeName>
        <fullName>Multidrug-efflux transporter</fullName>
    </alternativeName>
</protein>
<accession>P58164</accession>
<feature type="chain" id="PRO_0000164183" description="Multidrug resistance protein MdtK">
    <location>
        <begin position="1"/>
        <end position="457"/>
    </location>
</feature>
<feature type="topological domain" description="Cytoplasmic" evidence="2">
    <location>
        <begin position="1"/>
        <end position="10"/>
    </location>
</feature>
<feature type="transmembrane region" description="Helical" evidence="2">
    <location>
        <begin position="11"/>
        <end position="31"/>
    </location>
</feature>
<feature type="topological domain" description="Extracellular" evidence="2">
    <location>
        <begin position="32"/>
        <end position="52"/>
    </location>
</feature>
<feature type="transmembrane region" description="Helical" evidence="2">
    <location>
        <begin position="53"/>
        <end position="73"/>
    </location>
</feature>
<feature type="topological domain" description="Cytoplasmic" evidence="2">
    <location>
        <begin position="74"/>
        <end position="92"/>
    </location>
</feature>
<feature type="transmembrane region" description="Helical" evidence="2">
    <location>
        <begin position="93"/>
        <end position="113"/>
    </location>
</feature>
<feature type="topological domain" description="Extracellular" evidence="2">
    <location>
        <begin position="114"/>
        <end position="126"/>
    </location>
</feature>
<feature type="transmembrane region" description="Helical" evidence="2">
    <location>
        <begin position="127"/>
        <end position="147"/>
    </location>
</feature>
<feature type="topological domain" description="Cytoplasmic" evidence="2">
    <location>
        <begin position="148"/>
        <end position="159"/>
    </location>
</feature>
<feature type="transmembrane region" description="Helical" evidence="2">
    <location>
        <begin position="160"/>
        <end position="180"/>
    </location>
</feature>
<feature type="topological domain" description="Extracellular" evidence="2">
    <location>
        <begin position="181"/>
        <end position="188"/>
    </location>
</feature>
<feature type="transmembrane region" description="Helical" evidence="2">
    <location>
        <begin position="189"/>
        <end position="209"/>
    </location>
</feature>
<feature type="topological domain" description="Cytoplasmic" evidence="2">
    <location>
        <begin position="210"/>
        <end position="242"/>
    </location>
</feature>
<feature type="transmembrane region" description="Helical" evidence="2">
    <location>
        <begin position="243"/>
        <end position="263"/>
    </location>
</feature>
<feature type="topological domain" description="Extracellular" evidence="2">
    <location>
        <begin position="264"/>
        <end position="275"/>
    </location>
</feature>
<feature type="transmembrane region" description="Helical" evidence="2">
    <location>
        <begin position="276"/>
        <end position="296"/>
    </location>
</feature>
<feature type="topological domain" description="Cytoplasmic" evidence="2">
    <location>
        <begin position="297"/>
        <end position="313"/>
    </location>
</feature>
<feature type="transmembrane region" description="Helical" evidence="2">
    <location>
        <begin position="314"/>
        <end position="334"/>
    </location>
</feature>
<feature type="topological domain" description="Extracellular" evidence="2">
    <location>
        <begin position="335"/>
        <end position="349"/>
    </location>
</feature>
<feature type="transmembrane region" description="Helical" evidence="2">
    <location>
        <begin position="350"/>
        <end position="370"/>
    </location>
</feature>
<feature type="topological domain" description="Cytoplasmic" evidence="2">
    <location>
        <begin position="371"/>
        <end position="386"/>
    </location>
</feature>
<feature type="transmembrane region" description="Helical" evidence="2">
    <location>
        <begin position="387"/>
        <end position="407"/>
    </location>
</feature>
<feature type="topological domain" description="Extracellular" evidence="2">
    <location>
        <begin position="408"/>
        <end position="417"/>
    </location>
</feature>
<feature type="transmembrane region" description="Helical" evidence="2">
    <location>
        <begin position="418"/>
        <end position="438"/>
    </location>
</feature>
<feature type="topological domain" description="Cytoplasmic" evidence="2">
    <location>
        <begin position="439"/>
        <end position="457"/>
    </location>
</feature>
<comment type="function">
    <text evidence="1">Multidrug efflux pump that functions probably as a Na(+)/drug antiporter.</text>
</comment>
<comment type="subcellular location">
    <subcellularLocation>
        <location evidence="1">Cell inner membrane</location>
        <topology evidence="1">Multi-pass membrane protein</topology>
    </subcellularLocation>
</comment>
<comment type="similarity">
    <text evidence="3">Belongs to the multi antimicrobial extrusion (MATE) (TC 2.A.66.1) family. MdtK subfamily.</text>
</comment>
<evidence type="ECO:0000250" key="1"/>
<evidence type="ECO:0000255" key="2"/>
<evidence type="ECO:0000305" key="3"/>
<sequence>MQKYISEARLLLALAIPVILAQIAQTAMGFVDTVMAGGYSATDMAAVAIGTSIWLPAILFGHGLLLALTPVIAQLNGSGRRERIAHQVRQGFWLAGFVSVLIMLVLWNAGYIIRSMENIDPALADKAVGYLRALLWGAPGYLFFQVARNQCEGLAKTKPGMVMGFIGLLVNIPVNYIFIYGHFGMPELGGVGCGVATAAVYWVMFLAMVSYIKRARSMRDIRNEKGTAKPDPAVMKRLIQLGLPIALALFFEVTLFAVVALLVSPLGIVDVAGHQIALNFSSLMFVLPMSLAAAVTIRVGYRLGQGSTLDAQTAARTGLMVGVCMATLTAIFTVSLREQIALLYNDNPEVVTLAAHLMLLAAVYQISDSIQVIGSGILRGYKDTRSIFYITFTAYWVLGLPSGYILALTDLVVEPMGPAGFWIGFIIGLTSAAIMMMLRMRYLQRLPSAIILQRASR</sequence>
<proteinExistence type="inferred from homology"/>
<gene>
    <name type="primary">mdtK</name>
    <name type="synonym">norM</name>
    <name type="ordered locus">Z2690</name>
    <name type="ordered locus">ECs2372</name>
</gene>
<reference key="1">
    <citation type="journal article" date="2001" name="Nature">
        <title>Genome sequence of enterohaemorrhagic Escherichia coli O157:H7.</title>
        <authorList>
            <person name="Perna N.T."/>
            <person name="Plunkett G. III"/>
            <person name="Burland V."/>
            <person name="Mau B."/>
            <person name="Glasner J.D."/>
            <person name="Rose D.J."/>
            <person name="Mayhew G.F."/>
            <person name="Evans P.S."/>
            <person name="Gregor J."/>
            <person name="Kirkpatrick H.A."/>
            <person name="Posfai G."/>
            <person name="Hackett J."/>
            <person name="Klink S."/>
            <person name="Boutin A."/>
            <person name="Shao Y."/>
            <person name="Miller L."/>
            <person name="Grotbeck E.J."/>
            <person name="Davis N.W."/>
            <person name="Lim A."/>
            <person name="Dimalanta E.T."/>
            <person name="Potamousis K."/>
            <person name="Apodaca J."/>
            <person name="Anantharaman T.S."/>
            <person name="Lin J."/>
            <person name="Yen G."/>
            <person name="Schwartz D.C."/>
            <person name="Welch R.A."/>
            <person name="Blattner F.R."/>
        </authorList>
    </citation>
    <scope>NUCLEOTIDE SEQUENCE [LARGE SCALE GENOMIC DNA]</scope>
    <source>
        <strain>O157:H7 / EDL933 / ATCC 700927 / EHEC</strain>
    </source>
</reference>
<reference key="2">
    <citation type="journal article" date="2001" name="DNA Res.">
        <title>Complete genome sequence of enterohemorrhagic Escherichia coli O157:H7 and genomic comparison with a laboratory strain K-12.</title>
        <authorList>
            <person name="Hayashi T."/>
            <person name="Makino K."/>
            <person name="Ohnishi M."/>
            <person name="Kurokawa K."/>
            <person name="Ishii K."/>
            <person name="Yokoyama K."/>
            <person name="Han C.-G."/>
            <person name="Ohtsubo E."/>
            <person name="Nakayama K."/>
            <person name="Murata T."/>
            <person name="Tanaka M."/>
            <person name="Tobe T."/>
            <person name="Iida T."/>
            <person name="Takami H."/>
            <person name="Honda T."/>
            <person name="Sasakawa C."/>
            <person name="Ogasawara N."/>
            <person name="Yasunaga T."/>
            <person name="Kuhara S."/>
            <person name="Shiba T."/>
            <person name="Hattori M."/>
            <person name="Shinagawa H."/>
        </authorList>
    </citation>
    <scope>NUCLEOTIDE SEQUENCE [LARGE SCALE GENOMIC DNA]</scope>
    <source>
        <strain>O157:H7 / Sakai / RIMD 0509952 / EHEC</strain>
    </source>
</reference>
<dbReference type="EMBL" id="AE005174">
    <property type="protein sequence ID" value="AAG56652.1"/>
    <property type="molecule type" value="Genomic_DNA"/>
</dbReference>
<dbReference type="EMBL" id="BA000007">
    <property type="protein sequence ID" value="BAB35795.1"/>
    <property type="molecule type" value="Genomic_DNA"/>
</dbReference>
<dbReference type="PIR" id="D90925">
    <property type="entry name" value="D90925"/>
</dbReference>
<dbReference type="PIR" id="H85773">
    <property type="entry name" value="H85773"/>
</dbReference>
<dbReference type="RefSeq" id="NP_310399.1">
    <property type="nucleotide sequence ID" value="NC_002695.1"/>
</dbReference>
<dbReference type="RefSeq" id="WP_001174945.1">
    <property type="nucleotide sequence ID" value="NZ_VOAI01000007.1"/>
</dbReference>
<dbReference type="SMR" id="P58164"/>
<dbReference type="STRING" id="155864.Z2690"/>
<dbReference type="GeneID" id="912329"/>
<dbReference type="KEGG" id="ece:Z2690"/>
<dbReference type="KEGG" id="ecs:ECs_2372"/>
<dbReference type="PATRIC" id="fig|386585.9.peg.2484"/>
<dbReference type="eggNOG" id="COG0534">
    <property type="taxonomic scope" value="Bacteria"/>
</dbReference>
<dbReference type="HOGENOM" id="CLU_012893_6_0_6"/>
<dbReference type="OMA" id="WFFVWKL"/>
<dbReference type="Proteomes" id="UP000000558">
    <property type="component" value="Chromosome"/>
</dbReference>
<dbReference type="Proteomes" id="UP000002519">
    <property type="component" value="Chromosome"/>
</dbReference>
<dbReference type="GO" id="GO:0005886">
    <property type="term" value="C:plasma membrane"/>
    <property type="evidence" value="ECO:0007669"/>
    <property type="project" value="UniProtKB-SubCell"/>
</dbReference>
<dbReference type="GO" id="GO:0015297">
    <property type="term" value="F:antiporter activity"/>
    <property type="evidence" value="ECO:0007669"/>
    <property type="project" value="UniProtKB-UniRule"/>
</dbReference>
<dbReference type="GO" id="GO:0042910">
    <property type="term" value="F:xenobiotic transmembrane transporter activity"/>
    <property type="evidence" value="ECO:0007669"/>
    <property type="project" value="UniProtKB-UniRule"/>
</dbReference>
<dbReference type="GO" id="GO:0006814">
    <property type="term" value="P:sodium ion transport"/>
    <property type="evidence" value="ECO:0007669"/>
    <property type="project" value="UniProtKB-UniRule"/>
</dbReference>
<dbReference type="GO" id="GO:0006855">
    <property type="term" value="P:xenobiotic transmembrane transport"/>
    <property type="evidence" value="ECO:0007669"/>
    <property type="project" value="UniProtKB-UniRule"/>
</dbReference>
<dbReference type="CDD" id="cd13131">
    <property type="entry name" value="MATE_NorM_like"/>
    <property type="match status" value="1"/>
</dbReference>
<dbReference type="HAMAP" id="MF_00400">
    <property type="entry name" value="MdtK"/>
    <property type="match status" value="1"/>
</dbReference>
<dbReference type="InterPro" id="IPR002528">
    <property type="entry name" value="MATE_fam"/>
</dbReference>
<dbReference type="InterPro" id="IPR050222">
    <property type="entry name" value="MATE_MdtK"/>
</dbReference>
<dbReference type="InterPro" id="IPR048279">
    <property type="entry name" value="MdtK-like"/>
</dbReference>
<dbReference type="InterPro" id="IPR022913">
    <property type="entry name" value="Multidrug-R_MdtK"/>
</dbReference>
<dbReference type="NCBIfam" id="TIGR00797">
    <property type="entry name" value="matE"/>
    <property type="match status" value="1"/>
</dbReference>
<dbReference type="PANTHER" id="PTHR43298:SF2">
    <property type="entry name" value="FMN_FAD EXPORTER YEEO-RELATED"/>
    <property type="match status" value="1"/>
</dbReference>
<dbReference type="PANTHER" id="PTHR43298">
    <property type="entry name" value="MULTIDRUG RESISTANCE PROTEIN NORM-RELATED"/>
    <property type="match status" value="1"/>
</dbReference>
<dbReference type="Pfam" id="PF01554">
    <property type="entry name" value="MatE"/>
    <property type="match status" value="2"/>
</dbReference>
<dbReference type="PIRSF" id="PIRSF006603">
    <property type="entry name" value="DinF"/>
    <property type="match status" value="1"/>
</dbReference>
<name>MDTK_ECO57</name>
<keyword id="KW-0050">Antiport</keyword>
<keyword id="KW-0997">Cell inner membrane</keyword>
<keyword id="KW-1003">Cell membrane</keyword>
<keyword id="KW-0406">Ion transport</keyword>
<keyword id="KW-0472">Membrane</keyword>
<keyword id="KW-1185">Reference proteome</keyword>
<keyword id="KW-0915">Sodium</keyword>
<keyword id="KW-0739">Sodium transport</keyword>
<keyword id="KW-0812">Transmembrane</keyword>
<keyword id="KW-1133">Transmembrane helix</keyword>
<keyword id="KW-0813">Transport</keyword>
<organism>
    <name type="scientific">Escherichia coli O157:H7</name>
    <dbReference type="NCBI Taxonomy" id="83334"/>
    <lineage>
        <taxon>Bacteria</taxon>
        <taxon>Pseudomonadati</taxon>
        <taxon>Pseudomonadota</taxon>
        <taxon>Gammaproteobacteria</taxon>
        <taxon>Enterobacterales</taxon>
        <taxon>Enterobacteriaceae</taxon>
        <taxon>Escherichia</taxon>
    </lineage>
</organism>